<protein>
    <recommendedName>
        <fullName evidence="1">Serine--tRNA ligase</fullName>
        <ecNumber evidence="1">6.1.1.11</ecNumber>
    </recommendedName>
    <alternativeName>
        <fullName evidence="1">Seryl-tRNA synthetase</fullName>
        <shortName evidence="1">SerRS</shortName>
    </alternativeName>
    <alternativeName>
        <fullName evidence="1">Seryl-tRNA(Ser/Sec) synthetase</fullName>
    </alternativeName>
</protein>
<feature type="chain" id="PRO_1000019732" description="Serine--tRNA ligase">
    <location>
        <begin position="1"/>
        <end position="424"/>
    </location>
</feature>
<feature type="binding site" evidence="1">
    <location>
        <begin position="229"/>
        <end position="231"/>
    </location>
    <ligand>
        <name>L-serine</name>
        <dbReference type="ChEBI" id="CHEBI:33384"/>
    </ligand>
</feature>
<feature type="binding site" evidence="1">
    <location>
        <begin position="260"/>
        <end position="262"/>
    </location>
    <ligand>
        <name>ATP</name>
        <dbReference type="ChEBI" id="CHEBI:30616"/>
    </ligand>
</feature>
<feature type="binding site" evidence="1">
    <location>
        <position position="276"/>
    </location>
    <ligand>
        <name>ATP</name>
        <dbReference type="ChEBI" id="CHEBI:30616"/>
    </ligand>
</feature>
<feature type="binding site" evidence="1">
    <location>
        <position position="283"/>
    </location>
    <ligand>
        <name>L-serine</name>
        <dbReference type="ChEBI" id="CHEBI:33384"/>
    </ligand>
</feature>
<feature type="binding site" evidence="1">
    <location>
        <begin position="347"/>
        <end position="350"/>
    </location>
    <ligand>
        <name>ATP</name>
        <dbReference type="ChEBI" id="CHEBI:30616"/>
    </ligand>
</feature>
<feature type="binding site" evidence="1">
    <location>
        <position position="383"/>
    </location>
    <ligand>
        <name>L-serine</name>
        <dbReference type="ChEBI" id="CHEBI:33384"/>
    </ligand>
</feature>
<comment type="function">
    <text evidence="1">Catalyzes the attachment of serine to tRNA(Ser). Is also able to aminoacylate tRNA(Sec) with serine, to form the misacylated tRNA L-seryl-tRNA(Sec), which will be further converted into selenocysteinyl-tRNA(Sec).</text>
</comment>
<comment type="catalytic activity">
    <reaction evidence="1">
        <text>tRNA(Ser) + L-serine + ATP = L-seryl-tRNA(Ser) + AMP + diphosphate + H(+)</text>
        <dbReference type="Rhea" id="RHEA:12292"/>
        <dbReference type="Rhea" id="RHEA-COMP:9669"/>
        <dbReference type="Rhea" id="RHEA-COMP:9703"/>
        <dbReference type="ChEBI" id="CHEBI:15378"/>
        <dbReference type="ChEBI" id="CHEBI:30616"/>
        <dbReference type="ChEBI" id="CHEBI:33019"/>
        <dbReference type="ChEBI" id="CHEBI:33384"/>
        <dbReference type="ChEBI" id="CHEBI:78442"/>
        <dbReference type="ChEBI" id="CHEBI:78533"/>
        <dbReference type="ChEBI" id="CHEBI:456215"/>
        <dbReference type="EC" id="6.1.1.11"/>
    </reaction>
</comment>
<comment type="catalytic activity">
    <reaction evidence="1">
        <text>tRNA(Sec) + L-serine + ATP = L-seryl-tRNA(Sec) + AMP + diphosphate + H(+)</text>
        <dbReference type="Rhea" id="RHEA:42580"/>
        <dbReference type="Rhea" id="RHEA-COMP:9742"/>
        <dbReference type="Rhea" id="RHEA-COMP:10128"/>
        <dbReference type="ChEBI" id="CHEBI:15378"/>
        <dbReference type="ChEBI" id="CHEBI:30616"/>
        <dbReference type="ChEBI" id="CHEBI:33019"/>
        <dbReference type="ChEBI" id="CHEBI:33384"/>
        <dbReference type="ChEBI" id="CHEBI:78442"/>
        <dbReference type="ChEBI" id="CHEBI:78533"/>
        <dbReference type="ChEBI" id="CHEBI:456215"/>
        <dbReference type="EC" id="6.1.1.11"/>
    </reaction>
</comment>
<comment type="pathway">
    <text evidence="1">Aminoacyl-tRNA biosynthesis; selenocysteinyl-tRNA(Sec) biosynthesis; L-seryl-tRNA(Sec) from L-serine and tRNA(Sec): step 1/1.</text>
</comment>
<comment type="subunit">
    <text evidence="1">Homodimer. The tRNA molecule binds across the dimer.</text>
</comment>
<comment type="subcellular location">
    <subcellularLocation>
        <location evidence="1">Cytoplasm</location>
    </subcellularLocation>
</comment>
<comment type="domain">
    <text evidence="1">Consists of two distinct domains, a catalytic core and a N-terminal extension that is involved in tRNA binding.</text>
</comment>
<comment type="similarity">
    <text evidence="1">Belongs to the class-II aminoacyl-tRNA synthetase family. Type-1 seryl-tRNA synthetase subfamily.</text>
</comment>
<gene>
    <name evidence="1" type="primary">serS</name>
    <name type="ordered locus">Msp_1277</name>
</gene>
<keyword id="KW-0030">Aminoacyl-tRNA synthetase</keyword>
<keyword id="KW-0067">ATP-binding</keyword>
<keyword id="KW-0963">Cytoplasm</keyword>
<keyword id="KW-0436">Ligase</keyword>
<keyword id="KW-0547">Nucleotide-binding</keyword>
<keyword id="KW-0648">Protein biosynthesis</keyword>
<keyword id="KW-1185">Reference proteome</keyword>
<proteinExistence type="inferred from homology"/>
<organism>
    <name type="scientific">Methanosphaera stadtmanae (strain ATCC 43021 / DSM 3091 / JCM 11832 / MCB-3)</name>
    <dbReference type="NCBI Taxonomy" id="339860"/>
    <lineage>
        <taxon>Archaea</taxon>
        <taxon>Methanobacteriati</taxon>
        <taxon>Methanobacteriota</taxon>
        <taxon>Methanomada group</taxon>
        <taxon>Methanobacteria</taxon>
        <taxon>Methanobacteriales</taxon>
        <taxon>Methanobacteriaceae</taxon>
        <taxon>Methanosphaera</taxon>
    </lineage>
</organism>
<evidence type="ECO:0000255" key="1">
    <source>
        <dbReference type="HAMAP-Rule" id="MF_00176"/>
    </source>
</evidence>
<reference key="1">
    <citation type="journal article" date="2006" name="J. Bacteriol.">
        <title>The genome sequence of Methanosphaera stadtmanae reveals why this human intestinal archaeon is restricted to methanol and H2 for methane formation and ATP synthesis.</title>
        <authorList>
            <person name="Fricke W.F."/>
            <person name="Seedorf H."/>
            <person name="Henne A."/>
            <person name="Kruer M."/>
            <person name="Liesegang H."/>
            <person name="Hedderich R."/>
            <person name="Gottschalk G."/>
            <person name="Thauer R.K."/>
        </authorList>
    </citation>
    <scope>NUCLEOTIDE SEQUENCE [LARGE SCALE GENOMIC DNA]</scope>
    <source>
        <strain>ATCC 43021 / DSM 3091 / JCM 11832 / MCB-3</strain>
    </source>
</reference>
<sequence>MLDIKLFREEPNKIFDSEKKRFRDTINVEKVIEYDNLWREGLQNLNNLRSEKNKLSKSFKQAKKDGNLEEVISKSKKVASDIKELEPKIEEYERIRDEYRYKVGNIIDENVPVSDTEDDNEVIRTNGDFPSFDFEPLNHVDLINLIDGADTDTASQIAGSRFYYLKQDILFLNLALIQFALNELKDKGYTPLQTPFFIKSEVAEETSELGEFEETLYKVENEDLYLIATAEQTLAALHRNEIIDSEDLPLRYCALSTCFRKEAGSHGKDTLGIFRVHQFEKVEQFIYATPENSTLEHEKLLEVTEGIYQKLGLPYQIVAIVSSALNDNAAIKYDLEAWFPGSGTYRELVSCTNCKDYQARKINTRYGKAGAGDAQILHTLNSTAIATERTICCILENYQQEDGSIKIPDVLIPYMNGKTIIEAK</sequence>
<accession>Q2NEU9</accession>
<dbReference type="EC" id="6.1.1.11" evidence="1"/>
<dbReference type="EMBL" id="CP000102">
    <property type="protein sequence ID" value="ABC57654.1"/>
    <property type="molecule type" value="Genomic_DNA"/>
</dbReference>
<dbReference type="RefSeq" id="WP_011406853.1">
    <property type="nucleotide sequence ID" value="NC_007681.1"/>
</dbReference>
<dbReference type="SMR" id="Q2NEU9"/>
<dbReference type="STRING" id="339860.Msp_1277"/>
<dbReference type="GeneID" id="41325847"/>
<dbReference type="KEGG" id="mst:Msp_1277"/>
<dbReference type="eggNOG" id="arCOG00403">
    <property type="taxonomic scope" value="Archaea"/>
</dbReference>
<dbReference type="HOGENOM" id="CLU_023797_0_1_2"/>
<dbReference type="OrthoDB" id="35932at2157"/>
<dbReference type="UniPathway" id="UPA00906">
    <property type="reaction ID" value="UER00895"/>
</dbReference>
<dbReference type="Proteomes" id="UP000001931">
    <property type="component" value="Chromosome"/>
</dbReference>
<dbReference type="GO" id="GO:0005737">
    <property type="term" value="C:cytoplasm"/>
    <property type="evidence" value="ECO:0007669"/>
    <property type="project" value="UniProtKB-SubCell"/>
</dbReference>
<dbReference type="GO" id="GO:0005524">
    <property type="term" value="F:ATP binding"/>
    <property type="evidence" value="ECO:0007669"/>
    <property type="project" value="UniProtKB-UniRule"/>
</dbReference>
<dbReference type="GO" id="GO:0004828">
    <property type="term" value="F:serine-tRNA ligase activity"/>
    <property type="evidence" value="ECO:0007669"/>
    <property type="project" value="UniProtKB-UniRule"/>
</dbReference>
<dbReference type="GO" id="GO:0016260">
    <property type="term" value="P:selenocysteine biosynthetic process"/>
    <property type="evidence" value="ECO:0007669"/>
    <property type="project" value="UniProtKB-UniRule"/>
</dbReference>
<dbReference type="GO" id="GO:0006434">
    <property type="term" value="P:seryl-tRNA aminoacylation"/>
    <property type="evidence" value="ECO:0007669"/>
    <property type="project" value="UniProtKB-UniRule"/>
</dbReference>
<dbReference type="CDD" id="cd00770">
    <property type="entry name" value="SerRS_core"/>
    <property type="match status" value="1"/>
</dbReference>
<dbReference type="Gene3D" id="3.30.930.10">
    <property type="entry name" value="Bira Bifunctional Protein, Domain 2"/>
    <property type="match status" value="1"/>
</dbReference>
<dbReference type="Gene3D" id="1.10.287.40">
    <property type="entry name" value="Serine-tRNA synthetase, tRNA binding domain"/>
    <property type="match status" value="1"/>
</dbReference>
<dbReference type="HAMAP" id="MF_00176">
    <property type="entry name" value="Ser_tRNA_synth_type1"/>
    <property type="match status" value="1"/>
</dbReference>
<dbReference type="InterPro" id="IPR002314">
    <property type="entry name" value="aa-tRNA-synt_IIb"/>
</dbReference>
<dbReference type="InterPro" id="IPR006195">
    <property type="entry name" value="aa-tRNA-synth_II"/>
</dbReference>
<dbReference type="InterPro" id="IPR045864">
    <property type="entry name" value="aa-tRNA-synth_II/BPL/LPL"/>
</dbReference>
<dbReference type="InterPro" id="IPR002317">
    <property type="entry name" value="Ser-tRNA-ligase_type_1"/>
</dbReference>
<dbReference type="InterPro" id="IPR015866">
    <property type="entry name" value="Ser-tRNA-synth_1_N"/>
</dbReference>
<dbReference type="InterPro" id="IPR042103">
    <property type="entry name" value="SerRS_1_N_sf"/>
</dbReference>
<dbReference type="InterPro" id="IPR033729">
    <property type="entry name" value="SerRS_core"/>
</dbReference>
<dbReference type="InterPro" id="IPR010978">
    <property type="entry name" value="tRNA-bd_arm"/>
</dbReference>
<dbReference type="NCBIfam" id="TIGR00414">
    <property type="entry name" value="serS"/>
    <property type="match status" value="1"/>
</dbReference>
<dbReference type="PANTHER" id="PTHR11778">
    <property type="entry name" value="SERYL-TRNA SYNTHETASE"/>
    <property type="match status" value="1"/>
</dbReference>
<dbReference type="Pfam" id="PF02403">
    <property type="entry name" value="Seryl_tRNA_N"/>
    <property type="match status" value="1"/>
</dbReference>
<dbReference type="Pfam" id="PF00587">
    <property type="entry name" value="tRNA-synt_2b"/>
    <property type="match status" value="1"/>
</dbReference>
<dbReference type="PIRSF" id="PIRSF001529">
    <property type="entry name" value="Ser-tRNA-synth_IIa"/>
    <property type="match status" value="1"/>
</dbReference>
<dbReference type="PRINTS" id="PR00981">
    <property type="entry name" value="TRNASYNTHSER"/>
</dbReference>
<dbReference type="SUPFAM" id="SSF55681">
    <property type="entry name" value="Class II aaRS and biotin synthetases"/>
    <property type="match status" value="1"/>
</dbReference>
<dbReference type="SUPFAM" id="SSF46589">
    <property type="entry name" value="tRNA-binding arm"/>
    <property type="match status" value="1"/>
</dbReference>
<dbReference type="PROSITE" id="PS50862">
    <property type="entry name" value="AA_TRNA_LIGASE_II"/>
    <property type="match status" value="1"/>
</dbReference>
<name>SYS_METST</name>